<dbReference type="EC" id="5.4.2.10" evidence="1"/>
<dbReference type="EMBL" id="AE017126">
    <property type="protein sequence ID" value="AAP99317.1"/>
    <property type="molecule type" value="Genomic_DNA"/>
</dbReference>
<dbReference type="RefSeq" id="NP_874665.1">
    <property type="nucleotide sequence ID" value="NC_005042.1"/>
</dbReference>
<dbReference type="RefSeq" id="WP_011124426.1">
    <property type="nucleotide sequence ID" value="NC_005042.1"/>
</dbReference>
<dbReference type="SMR" id="Q7VDU7"/>
<dbReference type="STRING" id="167539.Pro_0271"/>
<dbReference type="EnsemblBacteria" id="AAP99317">
    <property type="protein sequence ID" value="AAP99317"/>
    <property type="gene ID" value="Pro_0271"/>
</dbReference>
<dbReference type="KEGG" id="pma:Pro_0271"/>
<dbReference type="PATRIC" id="fig|167539.5.peg.279"/>
<dbReference type="eggNOG" id="COG1109">
    <property type="taxonomic scope" value="Bacteria"/>
</dbReference>
<dbReference type="HOGENOM" id="CLU_016950_7_0_3"/>
<dbReference type="OrthoDB" id="9806956at2"/>
<dbReference type="Proteomes" id="UP000001420">
    <property type="component" value="Chromosome"/>
</dbReference>
<dbReference type="GO" id="GO:0005829">
    <property type="term" value="C:cytosol"/>
    <property type="evidence" value="ECO:0007669"/>
    <property type="project" value="TreeGrafter"/>
</dbReference>
<dbReference type="GO" id="GO:0000287">
    <property type="term" value="F:magnesium ion binding"/>
    <property type="evidence" value="ECO:0007669"/>
    <property type="project" value="UniProtKB-UniRule"/>
</dbReference>
<dbReference type="GO" id="GO:0008966">
    <property type="term" value="F:phosphoglucosamine mutase activity"/>
    <property type="evidence" value="ECO:0007669"/>
    <property type="project" value="UniProtKB-UniRule"/>
</dbReference>
<dbReference type="GO" id="GO:0004615">
    <property type="term" value="F:phosphomannomutase activity"/>
    <property type="evidence" value="ECO:0007669"/>
    <property type="project" value="TreeGrafter"/>
</dbReference>
<dbReference type="GO" id="GO:0005975">
    <property type="term" value="P:carbohydrate metabolic process"/>
    <property type="evidence" value="ECO:0007669"/>
    <property type="project" value="InterPro"/>
</dbReference>
<dbReference type="GO" id="GO:0009252">
    <property type="term" value="P:peptidoglycan biosynthetic process"/>
    <property type="evidence" value="ECO:0007669"/>
    <property type="project" value="TreeGrafter"/>
</dbReference>
<dbReference type="GO" id="GO:0006048">
    <property type="term" value="P:UDP-N-acetylglucosamine biosynthetic process"/>
    <property type="evidence" value="ECO:0007669"/>
    <property type="project" value="TreeGrafter"/>
</dbReference>
<dbReference type="CDD" id="cd05802">
    <property type="entry name" value="GlmM"/>
    <property type="match status" value="1"/>
</dbReference>
<dbReference type="Gene3D" id="3.40.120.10">
    <property type="entry name" value="Alpha-D-Glucose-1,6-Bisphosphate, subunit A, domain 3"/>
    <property type="match status" value="3"/>
</dbReference>
<dbReference type="Gene3D" id="3.30.310.50">
    <property type="entry name" value="Alpha-D-phosphohexomutase, C-terminal domain"/>
    <property type="match status" value="1"/>
</dbReference>
<dbReference type="HAMAP" id="MF_01554_B">
    <property type="entry name" value="GlmM_B"/>
    <property type="match status" value="1"/>
</dbReference>
<dbReference type="InterPro" id="IPR005844">
    <property type="entry name" value="A-D-PHexomutase_a/b/a-I"/>
</dbReference>
<dbReference type="InterPro" id="IPR016055">
    <property type="entry name" value="A-D-PHexomutase_a/b/a-I/II/III"/>
</dbReference>
<dbReference type="InterPro" id="IPR005845">
    <property type="entry name" value="A-D-PHexomutase_a/b/a-II"/>
</dbReference>
<dbReference type="InterPro" id="IPR005846">
    <property type="entry name" value="A-D-PHexomutase_a/b/a-III"/>
</dbReference>
<dbReference type="InterPro" id="IPR005843">
    <property type="entry name" value="A-D-PHexomutase_C"/>
</dbReference>
<dbReference type="InterPro" id="IPR036900">
    <property type="entry name" value="A-D-PHexomutase_C_sf"/>
</dbReference>
<dbReference type="InterPro" id="IPR016066">
    <property type="entry name" value="A-D-PHexomutase_CS"/>
</dbReference>
<dbReference type="InterPro" id="IPR005841">
    <property type="entry name" value="Alpha-D-phosphohexomutase_SF"/>
</dbReference>
<dbReference type="InterPro" id="IPR006352">
    <property type="entry name" value="GlmM_bact"/>
</dbReference>
<dbReference type="InterPro" id="IPR050060">
    <property type="entry name" value="Phosphoglucosamine_mutase"/>
</dbReference>
<dbReference type="PANTHER" id="PTHR42946:SF1">
    <property type="entry name" value="PHOSPHOGLUCOMUTASE (ALPHA-D-GLUCOSE-1,6-BISPHOSPHATE-DEPENDENT)"/>
    <property type="match status" value="1"/>
</dbReference>
<dbReference type="PANTHER" id="PTHR42946">
    <property type="entry name" value="PHOSPHOHEXOSE MUTASE"/>
    <property type="match status" value="1"/>
</dbReference>
<dbReference type="Pfam" id="PF02878">
    <property type="entry name" value="PGM_PMM_I"/>
    <property type="match status" value="1"/>
</dbReference>
<dbReference type="Pfam" id="PF02879">
    <property type="entry name" value="PGM_PMM_II"/>
    <property type="match status" value="1"/>
</dbReference>
<dbReference type="Pfam" id="PF02880">
    <property type="entry name" value="PGM_PMM_III"/>
    <property type="match status" value="1"/>
</dbReference>
<dbReference type="Pfam" id="PF00408">
    <property type="entry name" value="PGM_PMM_IV"/>
    <property type="match status" value="1"/>
</dbReference>
<dbReference type="PRINTS" id="PR00509">
    <property type="entry name" value="PGMPMM"/>
</dbReference>
<dbReference type="SUPFAM" id="SSF55957">
    <property type="entry name" value="Phosphoglucomutase, C-terminal domain"/>
    <property type="match status" value="1"/>
</dbReference>
<dbReference type="SUPFAM" id="SSF53738">
    <property type="entry name" value="Phosphoglucomutase, first 3 domains"/>
    <property type="match status" value="3"/>
</dbReference>
<dbReference type="PROSITE" id="PS00710">
    <property type="entry name" value="PGM_PMM"/>
    <property type="match status" value="1"/>
</dbReference>
<name>GLMM_PROMA</name>
<keyword id="KW-0413">Isomerase</keyword>
<keyword id="KW-0460">Magnesium</keyword>
<keyword id="KW-0479">Metal-binding</keyword>
<keyword id="KW-0597">Phosphoprotein</keyword>
<keyword id="KW-1185">Reference proteome</keyword>
<evidence type="ECO:0000255" key="1">
    <source>
        <dbReference type="HAMAP-Rule" id="MF_01554"/>
    </source>
</evidence>
<accession>Q7VDU7</accession>
<gene>
    <name evidence="1" type="primary">glmM</name>
    <name type="ordered locus">Pro_0271</name>
</gene>
<sequence length="461" mass="50578">MSTNTISHVGDLNDEQALSFFGTDGIRGKSQTFLTNSLVSQIGYWCNHVLLGEGPILIGQDSRASSERIASALAHGLATKNREIWLLGLCPTPAVSHLIKKYNASGGLMISASHNPPEDNGIKIFDKTGEKISLEKQIFIDNKLKRKVLIPICKDKDNCINRNDLLKDYKNSLLNTVDKESLIDIPIVLDLCWGSASSCGEKLFKALGANVISINAIPDGEKINVNCGSTHLEHIKKVVLESNAQMGFAFDGDADRMIAIDGKGRVIDGDHSLYLWGSSLQDKNMLPEQRLVTTVMSNLGLEKAWLNRGGKLTRTPVGDQHVHKAMLTNKASLGGEQSGHILSTLNDLCGDGLLAAIQLSSICNRKGILLSEWRDQSFKPYPQKLISVPIAKHITQNYLNKSEKFRLSIAEAELDLGKEGRVFIRKSGTEPLVRVMVESIDKLLVESLTTKIAKIALEEFN</sequence>
<feature type="chain" id="PRO_0000147933" description="Phosphoglucosamine mutase">
    <location>
        <begin position="1"/>
        <end position="461"/>
    </location>
</feature>
<feature type="active site" description="Phosphoserine intermediate" evidence="1">
    <location>
        <position position="113"/>
    </location>
</feature>
<feature type="binding site" description="via phosphate group" evidence="1">
    <location>
        <position position="113"/>
    </location>
    <ligand>
        <name>Mg(2+)</name>
        <dbReference type="ChEBI" id="CHEBI:18420"/>
    </ligand>
</feature>
<feature type="binding site" evidence="1">
    <location>
        <position position="251"/>
    </location>
    <ligand>
        <name>Mg(2+)</name>
        <dbReference type="ChEBI" id="CHEBI:18420"/>
    </ligand>
</feature>
<feature type="binding site" evidence="1">
    <location>
        <position position="253"/>
    </location>
    <ligand>
        <name>Mg(2+)</name>
        <dbReference type="ChEBI" id="CHEBI:18420"/>
    </ligand>
</feature>
<feature type="binding site" evidence="1">
    <location>
        <position position="255"/>
    </location>
    <ligand>
        <name>Mg(2+)</name>
        <dbReference type="ChEBI" id="CHEBI:18420"/>
    </ligand>
</feature>
<feature type="modified residue" description="Phosphoserine" evidence="1">
    <location>
        <position position="113"/>
    </location>
</feature>
<protein>
    <recommendedName>
        <fullName evidence="1">Phosphoglucosamine mutase</fullName>
        <ecNumber evidence="1">5.4.2.10</ecNumber>
    </recommendedName>
</protein>
<proteinExistence type="inferred from homology"/>
<organism>
    <name type="scientific">Prochlorococcus marinus (strain SARG / CCMP1375 / SS120)</name>
    <dbReference type="NCBI Taxonomy" id="167539"/>
    <lineage>
        <taxon>Bacteria</taxon>
        <taxon>Bacillati</taxon>
        <taxon>Cyanobacteriota</taxon>
        <taxon>Cyanophyceae</taxon>
        <taxon>Synechococcales</taxon>
        <taxon>Prochlorococcaceae</taxon>
        <taxon>Prochlorococcus</taxon>
    </lineage>
</organism>
<reference key="1">
    <citation type="journal article" date="2003" name="Proc. Natl. Acad. Sci. U.S.A.">
        <title>Genome sequence of the cyanobacterium Prochlorococcus marinus SS120, a nearly minimal oxyphototrophic genome.</title>
        <authorList>
            <person name="Dufresne A."/>
            <person name="Salanoubat M."/>
            <person name="Partensky F."/>
            <person name="Artiguenave F."/>
            <person name="Axmann I.M."/>
            <person name="Barbe V."/>
            <person name="Duprat S."/>
            <person name="Galperin M.Y."/>
            <person name="Koonin E.V."/>
            <person name="Le Gall F."/>
            <person name="Makarova K.S."/>
            <person name="Ostrowski M."/>
            <person name="Oztas S."/>
            <person name="Robert C."/>
            <person name="Rogozin I.B."/>
            <person name="Scanlan D.J."/>
            <person name="Tandeau de Marsac N."/>
            <person name="Weissenbach J."/>
            <person name="Wincker P."/>
            <person name="Wolf Y.I."/>
            <person name="Hess W.R."/>
        </authorList>
    </citation>
    <scope>NUCLEOTIDE SEQUENCE [LARGE SCALE GENOMIC DNA]</scope>
    <source>
        <strain>SARG / CCMP1375 / SS120</strain>
    </source>
</reference>
<comment type="function">
    <text evidence="1">Catalyzes the conversion of glucosamine-6-phosphate to glucosamine-1-phosphate.</text>
</comment>
<comment type="catalytic activity">
    <reaction evidence="1">
        <text>alpha-D-glucosamine 1-phosphate = D-glucosamine 6-phosphate</text>
        <dbReference type="Rhea" id="RHEA:23424"/>
        <dbReference type="ChEBI" id="CHEBI:58516"/>
        <dbReference type="ChEBI" id="CHEBI:58725"/>
        <dbReference type="EC" id="5.4.2.10"/>
    </reaction>
</comment>
<comment type="cofactor">
    <cofactor evidence="1">
        <name>Mg(2+)</name>
        <dbReference type="ChEBI" id="CHEBI:18420"/>
    </cofactor>
    <text evidence="1">Binds 1 Mg(2+) ion per subunit.</text>
</comment>
<comment type="PTM">
    <text evidence="1">Activated by phosphorylation.</text>
</comment>
<comment type="similarity">
    <text evidence="1">Belongs to the phosphohexose mutase family.</text>
</comment>